<organism>
    <name type="scientific">Shouchella clausii (strain KSM-K16)</name>
    <name type="common">Alkalihalobacillus clausii</name>
    <dbReference type="NCBI Taxonomy" id="66692"/>
    <lineage>
        <taxon>Bacteria</taxon>
        <taxon>Bacillati</taxon>
        <taxon>Bacillota</taxon>
        <taxon>Bacilli</taxon>
        <taxon>Bacillales</taxon>
        <taxon>Bacillaceae</taxon>
        <taxon>Shouchella</taxon>
    </lineage>
</organism>
<sequence length="69" mass="8030">MIFKVYYQEDAAQMPVRERTKSLYIEGESEADVRLKLAKQNFNIEYVTAVTGAYLEYEQANSDFKVVNI</sequence>
<name>RPOY_SHOC1</name>
<reference key="1">
    <citation type="submission" date="2003-10" db="EMBL/GenBank/DDBJ databases">
        <title>The complete genome sequence of the alkaliphilic Bacillus clausii KSM-K16.</title>
        <authorList>
            <person name="Takaki Y."/>
            <person name="Kageyama Y."/>
            <person name="Shimamura S."/>
            <person name="Suzuki H."/>
            <person name="Nishi S."/>
            <person name="Hatada Y."/>
            <person name="Kawai S."/>
            <person name="Ito S."/>
            <person name="Horikoshi K."/>
        </authorList>
    </citation>
    <scope>NUCLEOTIDE SEQUENCE [LARGE SCALE GENOMIC DNA]</scope>
    <source>
        <strain>KSM-K16</strain>
    </source>
</reference>
<dbReference type="EC" id="2.7.7.6" evidence="1"/>
<dbReference type="EMBL" id="AP006627">
    <property type="protein sequence ID" value="BAD64959.1"/>
    <property type="molecule type" value="Genomic_DNA"/>
</dbReference>
<dbReference type="RefSeq" id="WP_011247267.1">
    <property type="nucleotide sequence ID" value="NC_006582.1"/>
</dbReference>
<dbReference type="SMR" id="Q5WFA1"/>
<dbReference type="STRING" id="66692.ABC2424"/>
<dbReference type="KEGG" id="bcl:ABC2424"/>
<dbReference type="eggNOG" id="COG5503">
    <property type="taxonomic scope" value="Bacteria"/>
</dbReference>
<dbReference type="HOGENOM" id="CLU_187518_1_0_9"/>
<dbReference type="OrthoDB" id="2147503at2"/>
<dbReference type="Proteomes" id="UP000001168">
    <property type="component" value="Chromosome"/>
</dbReference>
<dbReference type="GO" id="GO:0000428">
    <property type="term" value="C:DNA-directed RNA polymerase complex"/>
    <property type="evidence" value="ECO:0007669"/>
    <property type="project" value="UniProtKB-KW"/>
</dbReference>
<dbReference type="GO" id="GO:0003677">
    <property type="term" value="F:DNA binding"/>
    <property type="evidence" value="ECO:0007669"/>
    <property type="project" value="UniProtKB-UniRule"/>
</dbReference>
<dbReference type="GO" id="GO:0003899">
    <property type="term" value="F:DNA-directed RNA polymerase activity"/>
    <property type="evidence" value="ECO:0007669"/>
    <property type="project" value="UniProtKB-UniRule"/>
</dbReference>
<dbReference type="GO" id="GO:0006351">
    <property type="term" value="P:DNA-templated transcription"/>
    <property type="evidence" value="ECO:0007669"/>
    <property type="project" value="UniProtKB-UniRule"/>
</dbReference>
<dbReference type="Gene3D" id="3.10.20.730">
    <property type="entry name" value="RNAP, epsilon subunit-like"/>
    <property type="match status" value="1"/>
</dbReference>
<dbReference type="HAMAP" id="MF_01553">
    <property type="entry name" value="RNApol_bact_RpoY"/>
    <property type="match status" value="1"/>
</dbReference>
<dbReference type="InterPro" id="IPR009907">
    <property type="entry name" value="RpoY"/>
</dbReference>
<dbReference type="NCBIfam" id="NF010188">
    <property type="entry name" value="PRK13667.1"/>
    <property type="match status" value="1"/>
</dbReference>
<dbReference type="Pfam" id="PF07288">
    <property type="entry name" value="RpoY"/>
    <property type="match status" value="1"/>
</dbReference>
<proteinExistence type="inferred from homology"/>
<gene>
    <name evidence="1" type="primary">rpoY</name>
    <name type="ordered locus">ABC2424</name>
</gene>
<feature type="chain" id="PRO_0000163118" description="DNA-directed RNA polymerase subunit epsilon">
    <location>
        <begin position="1"/>
        <end position="69"/>
    </location>
</feature>
<protein>
    <recommendedName>
        <fullName evidence="1">DNA-directed RNA polymerase subunit epsilon</fullName>
        <shortName evidence="1">RNAP epsilon subunit</shortName>
        <ecNumber evidence="1">2.7.7.6</ecNumber>
    </recommendedName>
    <alternativeName>
        <fullName evidence="1">RNA polymerase epsilon subunit</fullName>
    </alternativeName>
    <alternativeName>
        <fullName evidence="1">Transcriptase subunit epsilon</fullName>
    </alternativeName>
</protein>
<accession>Q5WFA1</accession>
<keyword id="KW-0240">DNA-directed RNA polymerase</keyword>
<keyword id="KW-0548">Nucleotidyltransferase</keyword>
<keyword id="KW-1185">Reference proteome</keyword>
<keyword id="KW-0804">Transcription</keyword>
<keyword id="KW-0808">Transferase</keyword>
<comment type="function">
    <text evidence="1">A non-essential component of RNA polymerase (RNAP).</text>
</comment>
<comment type="catalytic activity">
    <reaction evidence="1">
        <text>RNA(n) + a ribonucleoside 5'-triphosphate = RNA(n+1) + diphosphate</text>
        <dbReference type="Rhea" id="RHEA:21248"/>
        <dbReference type="Rhea" id="RHEA-COMP:14527"/>
        <dbReference type="Rhea" id="RHEA-COMP:17342"/>
        <dbReference type="ChEBI" id="CHEBI:33019"/>
        <dbReference type="ChEBI" id="CHEBI:61557"/>
        <dbReference type="ChEBI" id="CHEBI:140395"/>
        <dbReference type="EC" id="2.7.7.6"/>
    </reaction>
</comment>
<comment type="subunit">
    <text evidence="1">RNAP is composed of a core of 2 alpha, a beta and a beta' subunit. The core is associated with a delta subunit, and at least one of epsilon or omega. When a sigma factor is associated with the core the holoenzyme is formed, which can initiate transcription.</text>
</comment>
<comment type="similarity">
    <text evidence="1">Belongs to the RNA polymerase subunit epsilon family.</text>
</comment>
<evidence type="ECO:0000255" key="1">
    <source>
        <dbReference type="HAMAP-Rule" id="MF_01553"/>
    </source>
</evidence>